<protein>
    <recommendedName>
        <fullName evidence="1">Glycerol-3-phosphate dehydrogenase [NAD(P)+]</fullName>
        <ecNumber evidence="1">1.1.1.94</ecNumber>
    </recommendedName>
    <alternativeName>
        <fullName evidence="1">NAD(P)(+)-dependent glycerol-3-phosphate dehydrogenase</fullName>
    </alternativeName>
    <alternativeName>
        <fullName evidence="1">NAD(P)H-dependent dihydroxyacetone-phosphate reductase</fullName>
    </alternativeName>
</protein>
<keyword id="KW-0963">Cytoplasm</keyword>
<keyword id="KW-0444">Lipid biosynthesis</keyword>
<keyword id="KW-0443">Lipid metabolism</keyword>
<keyword id="KW-0520">NAD</keyword>
<keyword id="KW-0521">NADP</keyword>
<keyword id="KW-0547">Nucleotide-binding</keyword>
<keyword id="KW-0560">Oxidoreductase</keyword>
<keyword id="KW-0594">Phospholipid biosynthesis</keyword>
<keyword id="KW-1208">Phospholipid metabolism</keyword>
<gene>
    <name evidence="1" type="primary">gpsA</name>
    <name type="ordered locus">FTW_1309</name>
</gene>
<dbReference type="EC" id="1.1.1.94" evidence="1"/>
<dbReference type="EMBL" id="CP000608">
    <property type="protein sequence ID" value="ABO47083.1"/>
    <property type="molecule type" value="Genomic_DNA"/>
</dbReference>
<dbReference type="RefSeq" id="WP_003018393.1">
    <property type="nucleotide sequence ID" value="NC_009257.1"/>
</dbReference>
<dbReference type="SMR" id="A4IYT2"/>
<dbReference type="KEGG" id="ftw:FTW_1309"/>
<dbReference type="HOGENOM" id="CLU_033449_0_2_6"/>
<dbReference type="UniPathway" id="UPA00940"/>
<dbReference type="GO" id="GO:0005829">
    <property type="term" value="C:cytosol"/>
    <property type="evidence" value="ECO:0007669"/>
    <property type="project" value="TreeGrafter"/>
</dbReference>
<dbReference type="GO" id="GO:0047952">
    <property type="term" value="F:glycerol-3-phosphate dehydrogenase [NAD(P)+] activity"/>
    <property type="evidence" value="ECO:0007669"/>
    <property type="project" value="UniProtKB-UniRule"/>
</dbReference>
<dbReference type="GO" id="GO:0051287">
    <property type="term" value="F:NAD binding"/>
    <property type="evidence" value="ECO:0007669"/>
    <property type="project" value="InterPro"/>
</dbReference>
<dbReference type="GO" id="GO:0005975">
    <property type="term" value="P:carbohydrate metabolic process"/>
    <property type="evidence" value="ECO:0007669"/>
    <property type="project" value="InterPro"/>
</dbReference>
<dbReference type="GO" id="GO:0046167">
    <property type="term" value="P:glycerol-3-phosphate biosynthetic process"/>
    <property type="evidence" value="ECO:0007669"/>
    <property type="project" value="UniProtKB-UniRule"/>
</dbReference>
<dbReference type="GO" id="GO:0046168">
    <property type="term" value="P:glycerol-3-phosphate catabolic process"/>
    <property type="evidence" value="ECO:0007669"/>
    <property type="project" value="InterPro"/>
</dbReference>
<dbReference type="GO" id="GO:0046474">
    <property type="term" value="P:glycerophospholipid biosynthetic process"/>
    <property type="evidence" value="ECO:0007669"/>
    <property type="project" value="TreeGrafter"/>
</dbReference>
<dbReference type="FunFam" id="1.10.1040.10:FF:000001">
    <property type="entry name" value="Glycerol-3-phosphate dehydrogenase [NAD(P)+]"/>
    <property type="match status" value="1"/>
</dbReference>
<dbReference type="FunFam" id="3.40.50.720:FF:000019">
    <property type="entry name" value="Glycerol-3-phosphate dehydrogenase [NAD(P)+]"/>
    <property type="match status" value="1"/>
</dbReference>
<dbReference type="Gene3D" id="1.10.1040.10">
    <property type="entry name" value="N-(1-d-carboxylethyl)-l-norvaline Dehydrogenase, domain 2"/>
    <property type="match status" value="1"/>
</dbReference>
<dbReference type="Gene3D" id="3.40.50.720">
    <property type="entry name" value="NAD(P)-binding Rossmann-like Domain"/>
    <property type="match status" value="1"/>
</dbReference>
<dbReference type="HAMAP" id="MF_00394">
    <property type="entry name" value="NAD_Glyc3P_dehydrog"/>
    <property type="match status" value="1"/>
</dbReference>
<dbReference type="InterPro" id="IPR008927">
    <property type="entry name" value="6-PGluconate_DH-like_C_sf"/>
</dbReference>
<dbReference type="InterPro" id="IPR013328">
    <property type="entry name" value="6PGD_dom2"/>
</dbReference>
<dbReference type="InterPro" id="IPR006168">
    <property type="entry name" value="G3P_DH_NAD-dep"/>
</dbReference>
<dbReference type="InterPro" id="IPR006109">
    <property type="entry name" value="G3P_DH_NAD-dep_C"/>
</dbReference>
<dbReference type="InterPro" id="IPR011128">
    <property type="entry name" value="G3P_DH_NAD-dep_N"/>
</dbReference>
<dbReference type="InterPro" id="IPR036291">
    <property type="entry name" value="NAD(P)-bd_dom_sf"/>
</dbReference>
<dbReference type="NCBIfam" id="NF000940">
    <property type="entry name" value="PRK00094.1-2"/>
    <property type="match status" value="1"/>
</dbReference>
<dbReference type="NCBIfam" id="NF000942">
    <property type="entry name" value="PRK00094.1-4"/>
    <property type="match status" value="1"/>
</dbReference>
<dbReference type="PANTHER" id="PTHR11728">
    <property type="entry name" value="GLYCEROL-3-PHOSPHATE DEHYDROGENASE"/>
    <property type="match status" value="1"/>
</dbReference>
<dbReference type="PANTHER" id="PTHR11728:SF1">
    <property type="entry name" value="GLYCEROL-3-PHOSPHATE DEHYDROGENASE [NAD(+)] 2, CHLOROPLASTIC"/>
    <property type="match status" value="1"/>
</dbReference>
<dbReference type="Pfam" id="PF07479">
    <property type="entry name" value="NAD_Gly3P_dh_C"/>
    <property type="match status" value="1"/>
</dbReference>
<dbReference type="Pfam" id="PF01210">
    <property type="entry name" value="NAD_Gly3P_dh_N"/>
    <property type="match status" value="1"/>
</dbReference>
<dbReference type="PIRSF" id="PIRSF000114">
    <property type="entry name" value="Glycerol-3-P_dh"/>
    <property type="match status" value="1"/>
</dbReference>
<dbReference type="PRINTS" id="PR00077">
    <property type="entry name" value="GPDHDRGNASE"/>
</dbReference>
<dbReference type="SUPFAM" id="SSF48179">
    <property type="entry name" value="6-phosphogluconate dehydrogenase C-terminal domain-like"/>
    <property type="match status" value="1"/>
</dbReference>
<dbReference type="SUPFAM" id="SSF51735">
    <property type="entry name" value="NAD(P)-binding Rossmann-fold domains"/>
    <property type="match status" value="1"/>
</dbReference>
<dbReference type="PROSITE" id="PS00957">
    <property type="entry name" value="NAD_G3PDH"/>
    <property type="match status" value="1"/>
</dbReference>
<proteinExistence type="inferred from homology"/>
<accession>A4IYT2</accession>
<sequence>MQKNILVLGAGAWGTALALQLAYRGHNVRINSWKAEHNEQMLKDNNNHKYLPSIEKFPSRLKAIQDWQANIIEFDSILVATPSSGFKNTILELKECILPQQNIISATKGFCHDSYALLSEIAEDILPTTKFALLTGPSFAKELANQLPTAVVVASKDINYARYVQELFSNENFRCYTTTDIIGAQVGGAVKNVLAITAGIAAGMEFGVNAHAALITRGLAEIKKLGLKLGANSETFIGLSCLGDLLLTCSDNQSRNRRFGLYLGQGMTIQQALKEVNNVVEGYFTAKAVYNLAKKHNVEMPLVFATYRILYEAADPRDIVKELMTRQLKNEN</sequence>
<comment type="function">
    <text evidence="1">Catalyzes the reduction of the glycolytic intermediate dihydroxyacetone phosphate (DHAP) to sn-glycerol 3-phosphate (G3P), the key precursor for phospholipid synthesis.</text>
</comment>
<comment type="catalytic activity">
    <reaction evidence="1">
        <text>sn-glycerol 3-phosphate + NAD(+) = dihydroxyacetone phosphate + NADH + H(+)</text>
        <dbReference type="Rhea" id="RHEA:11092"/>
        <dbReference type="ChEBI" id="CHEBI:15378"/>
        <dbReference type="ChEBI" id="CHEBI:57540"/>
        <dbReference type="ChEBI" id="CHEBI:57597"/>
        <dbReference type="ChEBI" id="CHEBI:57642"/>
        <dbReference type="ChEBI" id="CHEBI:57945"/>
        <dbReference type="EC" id="1.1.1.94"/>
    </reaction>
    <physiologicalReaction direction="right-to-left" evidence="1">
        <dbReference type="Rhea" id="RHEA:11094"/>
    </physiologicalReaction>
</comment>
<comment type="catalytic activity">
    <reaction evidence="1">
        <text>sn-glycerol 3-phosphate + NADP(+) = dihydroxyacetone phosphate + NADPH + H(+)</text>
        <dbReference type="Rhea" id="RHEA:11096"/>
        <dbReference type="ChEBI" id="CHEBI:15378"/>
        <dbReference type="ChEBI" id="CHEBI:57597"/>
        <dbReference type="ChEBI" id="CHEBI:57642"/>
        <dbReference type="ChEBI" id="CHEBI:57783"/>
        <dbReference type="ChEBI" id="CHEBI:58349"/>
        <dbReference type="EC" id="1.1.1.94"/>
    </reaction>
    <physiologicalReaction direction="right-to-left" evidence="1">
        <dbReference type="Rhea" id="RHEA:11098"/>
    </physiologicalReaction>
</comment>
<comment type="pathway">
    <text evidence="1">Membrane lipid metabolism; glycerophospholipid metabolism.</text>
</comment>
<comment type="subcellular location">
    <subcellularLocation>
        <location evidence="1">Cytoplasm</location>
    </subcellularLocation>
</comment>
<comment type="similarity">
    <text evidence="1">Belongs to the NAD-dependent glycerol-3-phosphate dehydrogenase family.</text>
</comment>
<feature type="chain" id="PRO_1000049508" description="Glycerol-3-phosphate dehydrogenase [NAD(P)+]">
    <location>
        <begin position="1"/>
        <end position="332"/>
    </location>
</feature>
<feature type="active site" description="Proton acceptor" evidence="1">
    <location>
        <position position="191"/>
    </location>
</feature>
<feature type="binding site" evidence="1">
    <location>
        <position position="13"/>
    </location>
    <ligand>
        <name>NADPH</name>
        <dbReference type="ChEBI" id="CHEBI:57783"/>
    </ligand>
</feature>
<feature type="binding site" evidence="1">
    <location>
        <position position="34"/>
    </location>
    <ligand>
        <name>NADPH</name>
        <dbReference type="ChEBI" id="CHEBI:57783"/>
    </ligand>
</feature>
<feature type="binding site" evidence="1">
    <location>
        <position position="108"/>
    </location>
    <ligand>
        <name>NADPH</name>
        <dbReference type="ChEBI" id="CHEBI:57783"/>
    </ligand>
</feature>
<feature type="binding site" evidence="1">
    <location>
        <position position="108"/>
    </location>
    <ligand>
        <name>sn-glycerol 3-phosphate</name>
        <dbReference type="ChEBI" id="CHEBI:57597"/>
    </ligand>
</feature>
<feature type="binding site" evidence="1">
    <location>
        <position position="136"/>
    </location>
    <ligand>
        <name>sn-glycerol 3-phosphate</name>
        <dbReference type="ChEBI" id="CHEBI:57597"/>
    </ligand>
</feature>
<feature type="binding site" evidence="1">
    <location>
        <position position="138"/>
    </location>
    <ligand>
        <name>sn-glycerol 3-phosphate</name>
        <dbReference type="ChEBI" id="CHEBI:57597"/>
    </ligand>
</feature>
<feature type="binding site" evidence="1">
    <location>
        <position position="140"/>
    </location>
    <ligand>
        <name>NADPH</name>
        <dbReference type="ChEBI" id="CHEBI:57783"/>
    </ligand>
</feature>
<feature type="binding site" evidence="1">
    <location>
        <position position="191"/>
    </location>
    <ligand>
        <name>sn-glycerol 3-phosphate</name>
        <dbReference type="ChEBI" id="CHEBI:57597"/>
    </ligand>
</feature>
<feature type="binding site" evidence="1">
    <location>
        <position position="244"/>
    </location>
    <ligand>
        <name>sn-glycerol 3-phosphate</name>
        <dbReference type="ChEBI" id="CHEBI:57597"/>
    </ligand>
</feature>
<feature type="binding site" evidence="1">
    <location>
        <position position="254"/>
    </location>
    <ligand>
        <name>sn-glycerol 3-phosphate</name>
        <dbReference type="ChEBI" id="CHEBI:57597"/>
    </ligand>
</feature>
<feature type="binding site" evidence="1">
    <location>
        <position position="255"/>
    </location>
    <ligand>
        <name>NADPH</name>
        <dbReference type="ChEBI" id="CHEBI:57783"/>
    </ligand>
</feature>
<feature type="binding site" evidence="1">
    <location>
        <position position="255"/>
    </location>
    <ligand>
        <name>sn-glycerol 3-phosphate</name>
        <dbReference type="ChEBI" id="CHEBI:57597"/>
    </ligand>
</feature>
<feature type="binding site" evidence="1">
    <location>
        <position position="256"/>
    </location>
    <ligand>
        <name>sn-glycerol 3-phosphate</name>
        <dbReference type="ChEBI" id="CHEBI:57597"/>
    </ligand>
</feature>
<feature type="binding site" evidence="1">
    <location>
        <position position="279"/>
    </location>
    <ligand>
        <name>NADPH</name>
        <dbReference type="ChEBI" id="CHEBI:57783"/>
    </ligand>
</feature>
<feature type="binding site" evidence="1">
    <location>
        <position position="281"/>
    </location>
    <ligand>
        <name>NADPH</name>
        <dbReference type="ChEBI" id="CHEBI:57783"/>
    </ligand>
</feature>
<name>GPDA_FRATW</name>
<reference key="1">
    <citation type="journal article" date="2007" name="PLoS ONE">
        <title>Complete genomic characterization of a pathogenic A.II strain of Francisella tularensis subspecies tularensis.</title>
        <authorList>
            <person name="Beckstrom-Sternberg S.M."/>
            <person name="Auerbach R.K."/>
            <person name="Godbole S."/>
            <person name="Pearson J.V."/>
            <person name="Beckstrom-Sternberg J.S."/>
            <person name="Deng Z."/>
            <person name="Munk C."/>
            <person name="Kubota K."/>
            <person name="Zhou Y."/>
            <person name="Bruce D."/>
            <person name="Noronha J."/>
            <person name="Scheuermann R.H."/>
            <person name="Wang A."/>
            <person name="Wei X."/>
            <person name="Wang J."/>
            <person name="Hao J."/>
            <person name="Wagner D.M."/>
            <person name="Brettin T.S."/>
            <person name="Brown N."/>
            <person name="Gilna P."/>
            <person name="Keim P.S."/>
        </authorList>
    </citation>
    <scope>NUCLEOTIDE SEQUENCE [LARGE SCALE GENOMIC DNA]</scope>
    <source>
        <strain>WY96-3418</strain>
    </source>
</reference>
<organism>
    <name type="scientific">Francisella tularensis subsp. tularensis (strain WY96-3418)</name>
    <dbReference type="NCBI Taxonomy" id="418136"/>
    <lineage>
        <taxon>Bacteria</taxon>
        <taxon>Pseudomonadati</taxon>
        <taxon>Pseudomonadota</taxon>
        <taxon>Gammaproteobacteria</taxon>
        <taxon>Thiotrichales</taxon>
        <taxon>Francisellaceae</taxon>
        <taxon>Francisella</taxon>
    </lineage>
</organism>
<evidence type="ECO:0000255" key="1">
    <source>
        <dbReference type="HAMAP-Rule" id="MF_00394"/>
    </source>
</evidence>